<reference key="1">
    <citation type="journal article" date="2000" name="Mol. Phylogenet. Evol.">
        <title>Phylogenetic relationships of elapid snakes based on cytochrome b mtDNA sequences.</title>
        <authorList>
            <person name="Slowinski J.B."/>
            <person name="Keogh J.S."/>
        </authorList>
    </citation>
    <scope>NUCLEOTIDE SEQUENCE [GENOMIC DNA]</scope>
</reference>
<geneLocation type="mitochondrion"/>
<evidence type="ECO:0000250" key="1"/>
<evidence type="ECO:0000250" key="2">
    <source>
        <dbReference type="UniProtKB" id="P00157"/>
    </source>
</evidence>
<evidence type="ECO:0000255" key="3">
    <source>
        <dbReference type="PROSITE-ProRule" id="PRU00967"/>
    </source>
</evidence>
<evidence type="ECO:0000255" key="4">
    <source>
        <dbReference type="PROSITE-ProRule" id="PRU00968"/>
    </source>
</evidence>
<protein>
    <recommendedName>
        <fullName>Cytochrome b</fullName>
    </recommendedName>
    <alternativeName>
        <fullName>Complex III subunit 3</fullName>
    </alternativeName>
    <alternativeName>
        <fullName>Complex III subunit III</fullName>
    </alternativeName>
    <alternativeName>
        <fullName>Cytochrome b-c1 complex subunit 3</fullName>
    </alternativeName>
    <alternativeName>
        <fullName>Ubiquinol-cytochrome-c reductase complex cytochrome b subunit</fullName>
    </alternativeName>
</protein>
<name>CYB_ELACO</name>
<gene>
    <name type="primary">MT-CYB</name>
    <name type="synonym">COB</name>
    <name type="synonym">CYTB</name>
    <name type="synonym">MTCYB</name>
</gene>
<organism>
    <name type="scientific">Elapognathus coronatus</name>
    <name type="common">Western crowned snake</name>
    <name type="synonym">Drysdalia coronata</name>
    <dbReference type="NCBI Taxonomy" id="529694"/>
    <lineage>
        <taxon>Eukaryota</taxon>
        <taxon>Metazoa</taxon>
        <taxon>Chordata</taxon>
        <taxon>Craniata</taxon>
        <taxon>Vertebrata</taxon>
        <taxon>Euteleostomi</taxon>
        <taxon>Lepidosauria</taxon>
        <taxon>Squamata</taxon>
        <taxon>Bifurcata</taxon>
        <taxon>Unidentata</taxon>
        <taxon>Episquamata</taxon>
        <taxon>Toxicofera</taxon>
        <taxon>Serpentes</taxon>
        <taxon>Colubroidea</taxon>
        <taxon>Elapidae</taxon>
        <taxon>Hydrophiinae</taxon>
        <taxon>Elapognathus</taxon>
    </lineage>
</organism>
<proteinExistence type="inferred from homology"/>
<feature type="chain" id="PRO_0000060899" description="Cytochrome b">
    <location>
        <begin position="1"/>
        <end position="371"/>
    </location>
</feature>
<feature type="transmembrane region" description="Helical" evidence="2">
    <location>
        <begin position="25"/>
        <end position="45"/>
    </location>
</feature>
<feature type="transmembrane region" description="Helical" evidence="2">
    <location>
        <begin position="69"/>
        <end position="90"/>
    </location>
</feature>
<feature type="transmembrane region" description="Helical" evidence="2">
    <location>
        <begin position="105"/>
        <end position="125"/>
    </location>
</feature>
<feature type="transmembrane region" description="Helical" evidence="2">
    <location>
        <begin position="170"/>
        <end position="190"/>
    </location>
</feature>
<feature type="transmembrane region" description="Helical" evidence="2">
    <location>
        <begin position="218"/>
        <end position="238"/>
    </location>
</feature>
<feature type="transmembrane region" description="Helical" evidence="2">
    <location>
        <begin position="280"/>
        <end position="300"/>
    </location>
</feature>
<feature type="transmembrane region" description="Helical" evidence="2">
    <location>
        <begin position="312"/>
        <end position="332"/>
    </location>
</feature>
<feature type="transmembrane region" description="Helical" evidence="2">
    <location>
        <begin position="339"/>
        <end position="358"/>
    </location>
</feature>
<feature type="binding site" description="axial binding residue" evidence="2">
    <location>
        <position position="75"/>
    </location>
    <ligand>
        <name>heme b</name>
        <dbReference type="ChEBI" id="CHEBI:60344"/>
        <label>b562</label>
    </ligand>
    <ligandPart>
        <name>Fe</name>
        <dbReference type="ChEBI" id="CHEBI:18248"/>
    </ligandPart>
</feature>
<feature type="binding site" description="axial binding residue" evidence="2">
    <location>
        <position position="89"/>
    </location>
    <ligand>
        <name>heme b</name>
        <dbReference type="ChEBI" id="CHEBI:60344"/>
        <label>b566</label>
    </ligand>
    <ligandPart>
        <name>Fe</name>
        <dbReference type="ChEBI" id="CHEBI:18248"/>
    </ligandPart>
</feature>
<feature type="binding site" description="axial binding residue" evidence="2">
    <location>
        <position position="174"/>
    </location>
    <ligand>
        <name>heme b</name>
        <dbReference type="ChEBI" id="CHEBI:60344"/>
        <label>b562</label>
    </ligand>
    <ligandPart>
        <name>Fe</name>
        <dbReference type="ChEBI" id="CHEBI:18248"/>
    </ligandPart>
</feature>
<feature type="binding site" description="axial binding residue" evidence="2">
    <location>
        <position position="188"/>
    </location>
    <ligand>
        <name>heme b</name>
        <dbReference type="ChEBI" id="CHEBI:60344"/>
        <label>b566</label>
    </ligand>
    <ligandPart>
        <name>Fe</name>
        <dbReference type="ChEBI" id="CHEBI:18248"/>
    </ligandPart>
</feature>
<feature type="binding site" evidence="2">
    <location>
        <position position="193"/>
    </location>
    <ligand>
        <name>a ubiquinone</name>
        <dbReference type="ChEBI" id="CHEBI:16389"/>
    </ligand>
</feature>
<sequence length="371" mass="42139">MPNQHPLLSSNLLPVGSNISTWWNFGSMLLTCLALQTSTGFFLAIHYTANINLAFSSMIHILRDVPYGWTMQNLHAIGASLFFMCIYTHIARGLYYGLYMNKWVWLSGTILLMLLMATAFFGYVLPWGQMSFWAATVITNLLTAIPYIGTTLTTWLWGGFSINDPTLTRFFALHFILPFLIISLSSVHIILLHNDGSNNPLGTNPDIDKIPFHPYHSYKDMLMTTIMITLLFIIMSFSPDLFNDPENFSKANPLVTPQHIKPEWYFLFAYGILRSIPNKLGGTLALLMSIMILTTTPFTHTSHVRSMTFRPFTQLLFWTLIATFITITWTATKPVEPPFILISQTASVIYFSFFIINPVLGLIENKAMMTK</sequence>
<accession>Q9MLK9</accession>
<comment type="function">
    <text evidence="2">Component of the ubiquinol-cytochrome c reductase complex (complex III or cytochrome b-c1 complex) that is part of the mitochondrial respiratory chain. The b-c1 complex mediates electron transfer from ubiquinol to cytochrome c. Contributes to the generation of a proton gradient across the mitochondrial membrane that is then used for ATP synthesis.</text>
</comment>
<comment type="cofactor">
    <cofactor evidence="2">
        <name>heme b</name>
        <dbReference type="ChEBI" id="CHEBI:60344"/>
    </cofactor>
    <text evidence="2">Binds 2 heme b groups non-covalently.</text>
</comment>
<comment type="subunit">
    <text evidence="2">The cytochrome bc1 complex contains 3 respiratory subunits (MT-CYB, CYC1 and UQCRFS1), 2 core proteins (UQCRC1 and UQCRC2) and probably 6 low-molecular weight proteins.</text>
</comment>
<comment type="subcellular location">
    <subcellularLocation>
        <location evidence="2">Mitochondrion inner membrane</location>
        <topology evidence="2">Multi-pass membrane protein</topology>
    </subcellularLocation>
</comment>
<comment type="miscellaneous">
    <text evidence="1">Heme 1 (or BL or b562) is low-potential and absorbs at about 562 nm, and heme 2 (or BH or b566) is high-potential and absorbs at about 566 nm.</text>
</comment>
<comment type="similarity">
    <text evidence="3 4">Belongs to the cytochrome b family.</text>
</comment>
<comment type="caution">
    <text evidence="2">The full-length protein contains only eight transmembrane helices, not nine as predicted by bioinformatics tools.</text>
</comment>
<dbReference type="EMBL" id="AF217819">
    <property type="protein sequence ID" value="AAF37238.1"/>
    <property type="molecule type" value="Genomic_DNA"/>
</dbReference>
<dbReference type="SMR" id="Q9MLK9"/>
<dbReference type="GO" id="GO:0005743">
    <property type="term" value="C:mitochondrial inner membrane"/>
    <property type="evidence" value="ECO:0007669"/>
    <property type="project" value="UniProtKB-SubCell"/>
</dbReference>
<dbReference type="GO" id="GO:0045275">
    <property type="term" value="C:respiratory chain complex III"/>
    <property type="evidence" value="ECO:0007669"/>
    <property type="project" value="InterPro"/>
</dbReference>
<dbReference type="GO" id="GO:0046872">
    <property type="term" value="F:metal ion binding"/>
    <property type="evidence" value="ECO:0007669"/>
    <property type="project" value="UniProtKB-KW"/>
</dbReference>
<dbReference type="GO" id="GO:0008121">
    <property type="term" value="F:ubiquinol-cytochrome-c reductase activity"/>
    <property type="evidence" value="ECO:0007669"/>
    <property type="project" value="InterPro"/>
</dbReference>
<dbReference type="GO" id="GO:0006122">
    <property type="term" value="P:mitochondrial electron transport, ubiquinol to cytochrome c"/>
    <property type="evidence" value="ECO:0007669"/>
    <property type="project" value="TreeGrafter"/>
</dbReference>
<dbReference type="CDD" id="cd00290">
    <property type="entry name" value="cytochrome_b_C"/>
    <property type="match status" value="1"/>
</dbReference>
<dbReference type="CDD" id="cd00284">
    <property type="entry name" value="Cytochrome_b_N"/>
    <property type="match status" value="1"/>
</dbReference>
<dbReference type="Gene3D" id="1.20.810.10">
    <property type="entry name" value="Cytochrome Bc1 Complex, Chain C"/>
    <property type="match status" value="1"/>
</dbReference>
<dbReference type="InterPro" id="IPR005798">
    <property type="entry name" value="Cyt_b/b6_C"/>
</dbReference>
<dbReference type="InterPro" id="IPR036150">
    <property type="entry name" value="Cyt_b/b6_C_sf"/>
</dbReference>
<dbReference type="InterPro" id="IPR005797">
    <property type="entry name" value="Cyt_b/b6_N"/>
</dbReference>
<dbReference type="InterPro" id="IPR027387">
    <property type="entry name" value="Cytb/b6-like_sf"/>
</dbReference>
<dbReference type="InterPro" id="IPR030689">
    <property type="entry name" value="Cytochrome_b"/>
</dbReference>
<dbReference type="InterPro" id="IPR048260">
    <property type="entry name" value="Cytochrome_b_C_euk/bac"/>
</dbReference>
<dbReference type="InterPro" id="IPR048259">
    <property type="entry name" value="Cytochrome_b_N_euk/bac"/>
</dbReference>
<dbReference type="InterPro" id="IPR016174">
    <property type="entry name" value="Di-haem_cyt_TM"/>
</dbReference>
<dbReference type="PANTHER" id="PTHR19271">
    <property type="entry name" value="CYTOCHROME B"/>
    <property type="match status" value="1"/>
</dbReference>
<dbReference type="PANTHER" id="PTHR19271:SF16">
    <property type="entry name" value="CYTOCHROME B"/>
    <property type="match status" value="1"/>
</dbReference>
<dbReference type="Pfam" id="PF00032">
    <property type="entry name" value="Cytochrom_B_C"/>
    <property type="match status" value="1"/>
</dbReference>
<dbReference type="Pfam" id="PF00033">
    <property type="entry name" value="Cytochrome_B"/>
    <property type="match status" value="1"/>
</dbReference>
<dbReference type="PIRSF" id="PIRSF038885">
    <property type="entry name" value="COB"/>
    <property type="match status" value="1"/>
</dbReference>
<dbReference type="SUPFAM" id="SSF81648">
    <property type="entry name" value="a domain/subunit of cytochrome bc1 complex (Ubiquinol-cytochrome c reductase)"/>
    <property type="match status" value="1"/>
</dbReference>
<dbReference type="SUPFAM" id="SSF81342">
    <property type="entry name" value="Transmembrane di-heme cytochromes"/>
    <property type="match status" value="1"/>
</dbReference>
<dbReference type="PROSITE" id="PS51003">
    <property type="entry name" value="CYTB_CTER"/>
    <property type="match status" value="1"/>
</dbReference>
<dbReference type="PROSITE" id="PS51002">
    <property type="entry name" value="CYTB_NTER"/>
    <property type="match status" value="1"/>
</dbReference>
<keyword id="KW-0249">Electron transport</keyword>
<keyword id="KW-0349">Heme</keyword>
<keyword id="KW-0408">Iron</keyword>
<keyword id="KW-0472">Membrane</keyword>
<keyword id="KW-0479">Metal-binding</keyword>
<keyword id="KW-0496">Mitochondrion</keyword>
<keyword id="KW-0999">Mitochondrion inner membrane</keyword>
<keyword id="KW-0679">Respiratory chain</keyword>
<keyword id="KW-0812">Transmembrane</keyword>
<keyword id="KW-1133">Transmembrane helix</keyword>
<keyword id="KW-0813">Transport</keyword>
<keyword id="KW-0830">Ubiquinone</keyword>